<keyword id="KW-0686">Riboflavin biosynthesis</keyword>
<keyword id="KW-0808">Transferase</keyword>
<accession>B2T6D0</accession>
<evidence type="ECO:0000255" key="1">
    <source>
        <dbReference type="HAMAP-Rule" id="MF_00178"/>
    </source>
</evidence>
<feature type="chain" id="PRO_1000098169" description="6,7-dimethyl-8-ribityllumazine synthase">
    <location>
        <begin position="1"/>
        <end position="168"/>
    </location>
</feature>
<feature type="active site" description="Proton donor" evidence="1">
    <location>
        <position position="90"/>
    </location>
</feature>
<feature type="binding site" evidence="1">
    <location>
        <position position="24"/>
    </location>
    <ligand>
        <name>5-amino-6-(D-ribitylamino)uracil</name>
        <dbReference type="ChEBI" id="CHEBI:15934"/>
    </ligand>
</feature>
<feature type="binding site" evidence="1">
    <location>
        <begin position="58"/>
        <end position="60"/>
    </location>
    <ligand>
        <name>5-amino-6-(D-ribitylamino)uracil</name>
        <dbReference type="ChEBI" id="CHEBI:15934"/>
    </ligand>
</feature>
<feature type="binding site" evidence="1">
    <location>
        <begin position="82"/>
        <end position="84"/>
    </location>
    <ligand>
        <name>5-amino-6-(D-ribitylamino)uracil</name>
        <dbReference type="ChEBI" id="CHEBI:15934"/>
    </ligand>
</feature>
<feature type="binding site" evidence="1">
    <location>
        <begin position="87"/>
        <end position="88"/>
    </location>
    <ligand>
        <name>(2S)-2-hydroxy-3-oxobutyl phosphate</name>
        <dbReference type="ChEBI" id="CHEBI:58830"/>
    </ligand>
</feature>
<feature type="binding site" evidence="1">
    <location>
        <position position="115"/>
    </location>
    <ligand>
        <name>5-amino-6-(D-ribitylamino)uracil</name>
        <dbReference type="ChEBI" id="CHEBI:15934"/>
    </ligand>
</feature>
<feature type="binding site" evidence="1">
    <location>
        <position position="129"/>
    </location>
    <ligand>
        <name>(2S)-2-hydroxy-3-oxobutyl phosphate</name>
        <dbReference type="ChEBI" id="CHEBI:58830"/>
    </ligand>
</feature>
<name>RISB_PARPJ</name>
<dbReference type="EC" id="2.5.1.78" evidence="1"/>
<dbReference type="EMBL" id="CP001052">
    <property type="protein sequence ID" value="ACD17494.1"/>
    <property type="molecule type" value="Genomic_DNA"/>
</dbReference>
<dbReference type="RefSeq" id="WP_006050161.1">
    <property type="nucleotide sequence ID" value="NC_010681.1"/>
</dbReference>
<dbReference type="SMR" id="B2T6D0"/>
<dbReference type="STRING" id="398527.Bphyt_3102"/>
<dbReference type="GeneID" id="97308120"/>
<dbReference type="KEGG" id="bpy:Bphyt_3102"/>
<dbReference type="eggNOG" id="COG0054">
    <property type="taxonomic scope" value="Bacteria"/>
</dbReference>
<dbReference type="HOGENOM" id="CLU_089358_1_2_4"/>
<dbReference type="OrthoDB" id="9809709at2"/>
<dbReference type="UniPathway" id="UPA00275">
    <property type="reaction ID" value="UER00404"/>
</dbReference>
<dbReference type="Proteomes" id="UP000001739">
    <property type="component" value="Chromosome 1"/>
</dbReference>
<dbReference type="GO" id="GO:0005829">
    <property type="term" value="C:cytosol"/>
    <property type="evidence" value="ECO:0007669"/>
    <property type="project" value="TreeGrafter"/>
</dbReference>
<dbReference type="GO" id="GO:0009349">
    <property type="term" value="C:riboflavin synthase complex"/>
    <property type="evidence" value="ECO:0007669"/>
    <property type="project" value="InterPro"/>
</dbReference>
<dbReference type="GO" id="GO:0000906">
    <property type="term" value="F:6,7-dimethyl-8-ribityllumazine synthase activity"/>
    <property type="evidence" value="ECO:0007669"/>
    <property type="project" value="UniProtKB-UniRule"/>
</dbReference>
<dbReference type="GO" id="GO:0009231">
    <property type="term" value="P:riboflavin biosynthetic process"/>
    <property type="evidence" value="ECO:0007669"/>
    <property type="project" value="UniProtKB-UniRule"/>
</dbReference>
<dbReference type="CDD" id="cd09209">
    <property type="entry name" value="Lumazine_synthase-I"/>
    <property type="match status" value="1"/>
</dbReference>
<dbReference type="Gene3D" id="3.40.50.960">
    <property type="entry name" value="Lumazine/riboflavin synthase"/>
    <property type="match status" value="1"/>
</dbReference>
<dbReference type="HAMAP" id="MF_00178">
    <property type="entry name" value="Lumazine_synth"/>
    <property type="match status" value="1"/>
</dbReference>
<dbReference type="InterPro" id="IPR034964">
    <property type="entry name" value="LS"/>
</dbReference>
<dbReference type="InterPro" id="IPR002180">
    <property type="entry name" value="LS/RS"/>
</dbReference>
<dbReference type="InterPro" id="IPR036467">
    <property type="entry name" value="LS/RS_sf"/>
</dbReference>
<dbReference type="NCBIfam" id="TIGR00114">
    <property type="entry name" value="lumazine-synth"/>
    <property type="match status" value="1"/>
</dbReference>
<dbReference type="PANTHER" id="PTHR21058:SF0">
    <property type="entry name" value="6,7-DIMETHYL-8-RIBITYLLUMAZINE SYNTHASE"/>
    <property type="match status" value="1"/>
</dbReference>
<dbReference type="PANTHER" id="PTHR21058">
    <property type="entry name" value="6,7-DIMETHYL-8-RIBITYLLUMAZINE SYNTHASE DMRL SYNTHASE LUMAZINE SYNTHASE"/>
    <property type="match status" value="1"/>
</dbReference>
<dbReference type="Pfam" id="PF00885">
    <property type="entry name" value="DMRL_synthase"/>
    <property type="match status" value="1"/>
</dbReference>
<dbReference type="SUPFAM" id="SSF52121">
    <property type="entry name" value="Lumazine synthase"/>
    <property type="match status" value="1"/>
</dbReference>
<proteinExistence type="inferred from homology"/>
<comment type="function">
    <text evidence="1">Catalyzes the formation of 6,7-dimethyl-8-ribityllumazine by condensation of 5-amino-6-(D-ribitylamino)uracil with 3,4-dihydroxy-2-butanone 4-phosphate. This is the penultimate step in the biosynthesis of riboflavin.</text>
</comment>
<comment type="catalytic activity">
    <reaction evidence="1">
        <text>(2S)-2-hydroxy-3-oxobutyl phosphate + 5-amino-6-(D-ribitylamino)uracil = 6,7-dimethyl-8-(1-D-ribityl)lumazine + phosphate + 2 H2O + H(+)</text>
        <dbReference type="Rhea" id="RHEA:26152"/>
        <dbReference type="ChEBI" id="CHEBI:15377"/>
        <dbReference type="ChEBI" id="CHEBI:15378"/>
        <dbReference type="ChEBI" id="CHEBI:15934"/>
        <dbReference type="ChEBI" id="CHEBI:43474"/>
        <dbReference type="ChEBI" id="CHEBI:58201"/>
        <dbReference type="ChEBI" id="CHEBI:58830"/>
        <dbReference type="EC" id="2.5.1.78"/>
    </reaction>
</comment>
<comment type="pathway">
    <text evidence="1">Cofactor biosynthesis; riboflavin biosynthesis; riboflavin from 2-hydroxy-3-oxobutyl phosphate and 5-amino-6-(D-ribitylamino)uracil: step 1/2.</text>
</comment>
<comment type="similarity">
    <text evidence="1">Belongs to the DMRL synthase family.</text>
</comment>
<reference key="1">
    <citation type="journal article" date="2011" name="J. Bacteriol.">
        <title>Complete genome sequence of the plant growth-promoting endophyte Burkholderia phytofirmans strain PsJN.</title>
        <authorList>
            <person name="Weilharter A."/>
            <person name="Mitter B."/>
            <person name="Shin M.V."/>
            <person name="Chain P.S."/>
            <person name="Nowak J."/>
            <person name="Sessitsch A."/>
        </authorList>
    </citation>
    <scope>NUCLEOTIDE SEQUENCE [LARGE SCALE GENOMIC DNA]</scope>
    <source>
        <strain>DSM 17436 / LMG 22146 / PsJN</strain>
    </source>
</reference>
<organism>
    <name type="scientific">Paraburkholderia phytofirmans (strain DSM 17436 / LMG 22146 / PsJN)</name>
    <name type="common">Burkholderia phytofirmans</name>
    <dbReference type="NCBI Taxonomy" id="398527"/>
    <lineage>
        <taxon>Bacteria</taxon>
        <taxon>Pseudomonadati</taxon>
        <taxon>Pseudomonadota</taxon>
        <taxon>Betaproteobacteria</taxon>
        <taxon>Burkholderiales</taxon>
        <taxon>Burkholderiaceae</taxon>
        <taxon>Paraburkholderia</taxon>
    </lineage>
</organism>
<protein>
    <recommendedName>
        <fullName evidence="1">6,7-dimethyl-8-ribityllumazine synthase</fullName>
        <shortName evidence="1">DMRL synthase</shortName>
        <shortName evidence="1">LS</shortName>
        <shortName evidence="1">Lumazine synthase</shortName>
        <ecNumber evidence="1">2.5.1.78</ecNumber>
    </recommendedName>
</protein>
<gene>
    <name evidence="1" type="primary">ribH</name>
    <name type="ordered locus">Bphyt_3102</name>
</gene>
<sequence>MEIGQYQPNLDGDGLRIGIVQARFNEPVCNGLADSCIEELERLGVTGEDVLLVTVPGALEIPLALQKLAESAQFDALIALGAVIRGETYHFELVSNESGAGITRIGLDFGIPVANAVLTTENDEQAVARMTEKGRDAARVAVEMANLAVALEQLGGDDEEEDEEEEEA</sequence>